<proteinExistence type="inferred from homology"/>
<keyword id="KW-0067">ATP-binding</keyword>
<keyword id="KW-0520">NAD</keyword>
<keyword id="KW-0547">Nucleotide-binding</keyword>
<keyword id="KW-0548">Nucleotidyltransferase</keyword>
<keyword id="KW-0662">Pyridine nucleotide biosynthesis</keyword>
<keyword id="KW-0808">Transferase</keyword>
<reference key="1">
    <citation type="submission" date="2007-06" db="EMBL/GenBank/DDBJ databases">
        <authorList>
            <person name="Brinkac L.M."/>
            <person name="Daugherty S."/>
            <person name="Dodson R.J."/>
            <person name="Madupu R."/>
            <person name="Brown J.L."/>
            <person name="Bruce D."/>
            <person name="Detter C."/>
            <person name="Munk C."/>
            <person name="Smith L.A."/>
            <person name="Smith T.J."/>
            <person name="White O."/>
            <person name="Brettin T.S."/>
        </authorList>
    </citation>
    <scope>NUCLEOTIDE SEQUENCE [LARGE SCALE GENOMIC DNA]</scope>
    <source>
        <strain>Langeland / NCTC 10281 / Type F</strain>
    </source>
</reference>
<feature type="chain" id="PRO_0000310107" description="Probable nicotinate-nucleotide adenylyltransferase">
    <location>
        <begin position="1"/>
        <end position="201"/>
    </location>
</feature>
<dbReference type="EC" id="2.7.7.18" evidence="1"/>
<dbReference type="EMBL" id="CP000728">
    <property type="protein sequence ID" value="ABS42769.1"/>
    <property type="molecule type" value="Genomic_DNA"/>
</dbReference>
<dbReference type="RefSeq" id="WP_012100742.1">
    <property type="nucleotide sequence ID" value="NC_009699.1"/>
</dbReference>
<dbReference type="SMR" id="A7GHK0"/>
<dbReference type="KEGG" id="cbf:CLI_3038"/>
<dbReference type="HOGENOM" id="CLU_069765_3_2_9"/>
<dbReference type="UniPathway" id="UPA00253">
    <property type="reaction ID" value="UER00332"/>
</dbReference>
<dbReference type="Proteomes" id="UP000002410">
    <property type="component" value="Chromosome"/>
</dbReference>
<dbReference type="GO" id="GO:0005524">
    <property type="term" value="F:ATP binding"/>
    <property type="evidence" value="ECO:0007669"/>
    <property type="project" value="UniProtKB-KW"/>
</dbReference>
<dbReference type="GO" id="GO:0004515">
    <property type="term" value="F:nicotinate-nucleotide adenylyltransferase activity"/>
    <property type="evidence" value="ECO:0007669"/>
    <property type="project" value="UniProtKB-UniRule"/>
</dbReference>
<dbReference type="GO" id="GO:0009435">
    <property type="term" value="P:NAD biosynthetic process"/>
    <property type="evidence" value="ECO:0007669"/>
    <property type="project" value="UniProtKB-UniRule"/>
</dbReference>
<dbReference type="CDD" id="cd02165">
    <property type="entry name" value="NMNAT"/>
    <property type="match status" value="1"/>
</dbReference>
<dbReference type="FunFam" id="3.40.50.620:FF:000255">
    <property type="entry name" value="Probable nicotinate-nucleotide adenylyltransferase"/>
    <property type="match status" value="1"/>
</dbReference>
<dbReference type="Gene3D" id="3.40.50.620">
    <property type="entry name" value="HUPs"/>
    <property type="match status" value="1"/>
</dbReference>
<dbReference type="HAMAP" id="MF_00244">
    <property type="entry name" value="NaMN_adenylyltr"/>
    <property type="match status" value="1"/>
</dbReference>
<dbReference type="InterPro" id="IPR004821">
    <property type="entry name" value="Cyt_trans-like"/>
</dbReference>
<dbReference type="InterPro" id="IPR005248">
    <property type="entry name" value="NadD/NMNAT"/>
</dbReference>
<dbReference type="InterPro" id="IPR014729">
    <property type="entry name" value="Rossmann-like_a/b/a_fold"/>
</dbReference>
<dbReference type="NCBIfam" id="TIGR00125">
    <property type="entry name" value="cyt_tran_rel"/>
    <property type="match status" value="1"/>
</dbReference>
<dbReference type="NCBIfam" id="TIGR00482">
    <property type="entry name" value="nicotinate (nicotinamide) nucleotide adenylyltransferase"/>
    <property type="match status" value="1"/>
</dbReference>
<dbReference type="NCBIfam" id="NF000840">
    <property type="entry name" value="PRK00071.1-3"/>
    <property type="match status" value="1"/>
</dbReference>
<dbReference type="PANTHER" id="PTHR39321">
    <property type="entry name" value="NICOTINATE-NUCLEOTIDE ADENYLYLTRANSFERASE-RELATED"/>
    <property type="match status" value="1"/>
</dbReference>
<dbReference type="PANTHER" id="PTHR39321:SF3">
    <property type="entry name" value="PHOSPHOPANTETHEINE ADENYLYLTRANSFERASE"/>
    <property type="match status" value="1"/>
</dbReference>
<dbReference type="Pfam" id="PF01467">
    <property type="entry name" value="CTP_transf_like"/>
    <property type="match status" value="1"/>
</dbReference>
<dbReference type="SUPFAM" id="SSF52374">
    <property type="entry name" value="Nucleotidylyl transferase"/>
    <property type="match status" value="1"/>
</dbReference>
<protein>
    <recommendedName>
        <fullName evidence="1">Probable nicotinate-nucleotide adenylyltransferase</fullName>
        <ecNumber evidence="1">2.7.7.18</ecNumber>
    </recommendedName>
    <alternativeName>
        <fullName evidence="1">Deamido-NAD(+) diphosphorylase</fullName>
    </alternativeName>
    <alternativeName>
        <fullName evidence="1">Deamido-NAD(+) pyrophosphorylase</fullName>
    </alternativeName>
    <alternativeName>
        <fullName evidence="1">Nicotinate mononucleotide adenylyltransferase</fullName>
        <shortName evidence="1">NaMN adenylyltransferase</shortName>
    </alternativeName>
</protein>
<evidence type="ECO:0000255" key="1">
    <source>
        <dbReference type="HAMAP-Rule" id="MF_00244"/>
    </source>
</evidence>
<sequence length="201" mass="23932">MINKAILGGTFDPIHNAHINVAYEALERFNLEEVIFIPAGNPPHKINLKKTPAHIRYEMVKLAIEKETRFSISDFEIKSKGLSYTYRTLKHFKEKEPETNWYFITGEDCLSYLEHWKYIDEIFNICNFVIFSREGFKEKEEIIKKKKSILLKYRKEILFMDASILDISSTKIRNRIKEGKEVSFYMPDKVYKFILQNNLYK</sequence>
<gene>
    <name evidence="1" type="primary">nadD</name>
    <name type="ordered locus">CLI_3038</name>
</gene>
<comment type="function">
    <text evidence="1">Catalyzes the reversible adenylation of nicotinate mononucleotide (NaMN) to nicotinic acid adenine dinucleotide (NaAD).</text>
</comment>
<comment type="catalytic activity">
    <reaction evidence="1">
        <text>nicotinate beta-D-ribonucleotide + ATP + H(+) = deamido-NAD(+) + diphosphate</text>
        <dbReference type="Rhea" id="RHEA:22860"/>
        <dbReference type="ChEBI" id="CHEBI:15378"/>
        <dbReference type="ChEBI" id="CHEBI:30616"/>
        <dbReference type="ChEBI" id="CHEBI:33019"/>
        <dbReference type="ChEBI" id="CHEBI:57502"/>
        <dbReference type="ChEBI" id="CHEBI:58437"/>
        <dbReference type="EC" id="2.7.7.18"/>
    </reaction>
</comment>
<comment type="pathway">
    <text evidence="1">Cofactor biosynthesis; NAD(+) biosynthesis; deamido-NAD(+) from nicotinate D-ribonucleotide: step 1/1.</text>
</comment>
<comment type="similarity">
    <text evidence="1">Belongs to the NadD family.</text>
</comment>
<name>NADD_CLOBL</name>
<organism>
    <name type="scientific">Clostridium botulinum (strain Langeland / NCTC 10281 / Type F)</name>
    <dbReference type="NCBI Taxonomy" id="441772"/>
    <lineage>
        <taxon>Bacteria</taxon>
        <taxon>Bacillati</taxon>
        <taxon>Bacillota</taxon>
        <taxon>Clostridia</taxon>
        <taxon>Eubacteriales</taxon>
        <taxon>Clostridiaceae</taxon>
        <taxon>Clostridium</taxon>
    </lineage>
</organism>
<accession>A7GHK0</accession>